<feature type="chain" id="PRO_0000381822" description="Protein N-terminal glutamine amidohydrolase">
    <location>
        <begin position="1"/>
        <end position="211"/>
    </location>
</feature>
<feature type="active site" evidence="1">
    <location>
        <position position="24"/>
    </location>
</feature>
<feature type="active site" evidence="1">
    <location>
        <position position="78"/>
    </location>
</feature>
<feature type="active site" evidence="1">
    <location>
        <position position="94"/>
    </location>
</feature>
<sequence length="211" mass="24783">MSTNDANFMLFSNINDCSYVSCYCEENVWKLCEQVKKTYPSELPKCYAVFVSNERRTVPLWRQKAGRGDEKLVIWDYHVFFMHNPSPNRCLVFDLDTTLPFPTYFHKYVTETFRSDYALTPEHHRFFRVIPAEKYLAEFSSDRRHMRRPDGSWIKPPPSYPPIQTSASTHSLDDFICMKPGKGPGAVYDLLHFVQQFYKPPDRNIGTKTQN</sequence>
<name>NTAQ1_ANOGA</name>
<protein>
    <recommendedName>
        <fullName>Protein N-terminal glutamine amidohydrolase</fullName>
        <ecNumber evidence="2">3.5.1.122</ecNumber>
    </recommendedName>
    <alternativeName>
        <fullName>Protein NH2-terminal glutamine deamidase</fullName>
        <shortName>N-terminal Gln amidase</shortName>
        <shortName>Nt(Q)-amidase</shortName>
    </alternativeName>
    <alternativeName>
        <fullName>Protein tungus</fullName>
    </alternativeName>
</protein>
<reference key="1">
    <citation type="journal article" date="2002" name="Science">
        <title>The genome sequence of the malaria mosquito Anopheles gambiae.</title>
        <authorList>
            <person name="Holt R.A."/>
            <person name="Subramanian G.M."/>
            <person name="Halpern A."/>
            <person name="Sutton G.G."/>
            <person name="Charlab R."/>
            <person name="Nusskern D.R."/>
            <person name="Wincker P."/>
            <person name="Clark A.G."/>
            <person name="Ribeiro J.M.C."/>
            <person name="Wides R."/>
            <person name="Salzberg S.L."/>
            <person name="Loftus B.J."/>
            <person name="Yandell M.D."/>
            <person name="Majoros W.H."/>
            <person name="Rusch D.B."/>
            <person name="Lai Z."/>
            <person name="Kraft C.L."/>
            <person name="Abril J.F."/>
            <person name="Anthouard V."/>
            <person name="Arensburger P."/>
            <person name="Atkinson P.W."/>
            <person name="Baden H."/>
            <person name="de Berardinis V."/>
            <person name="Baldwin D."/>
            <person name="Benes V."/>
            <person name="Biedler J."/>
            <person name="Blass C."/>
            <person name="Bolanos R."/>
            <person name="Boscus D."/>
            <person name="Barnstead M."/>
            <person name="Cai S."/>
            <person name="Center A."/>
            <person name="Chaturverdi K."/>
            <person name="Christophides G.K."/>
            <person name="Chrystal M.A.M."/>
            <person name="Clamp M."/>
            <person name="Cravchik A."/>
            <person name="Curwen V."/>
            <person name="Dana A."/>
            <person name="Delcher A."/>
            <person name="Dew I."/>
            <person name="Evans C.A."/>
            <person name="Flanigan M."/>
            <person name="Grundschober-Freimoser A."/>
            <person name="Friedli L."/>
            <person name="Gu Z."/>
            <person name="Guan P."/>
            <person name="Guigo R."/>
            <person name="Hillenmeyer M.E."/>
            <person name="Hladun S.L."/>
            <person name="Hogan J.R."/>
            <person name="Hong Y.S."/>
            <person name="Hoover J."/>
            <person name="Jaillon O."/>
            <person name="Ke Z."/>
            <person name="Kodira C.D."/>
            <person name="Kokoza E."/>
            <person name="Koutsos A."/>
            <person name="Letunic I."/>
            <person name="Levitsky A.A."/>
            <person name="Liang Y."/>
            <person name="Lin J.-J."/>
            <person name="Lobo N.F."/>
            <person name="Lopez J.R."/>
            <person name="Malek J.A."/>
            <person name="McIntosh T.C."/>
            <person name="Meister S."/>
            <person name="Miller J.R."/>
            <person name="Mobarry C."/>
            <person name="Mongin E."/>
            <person name="Murphy S.D."/>
            <person name="O'Brochta D.A."/>
            <person name="Pfannkoch C."/>
            <person name="Qi R."/>
            <person name="Regier M.A."/>
            <person name="Remington K."/>
            <person name="Shao H."/>
            <person name="Sharakhova M.V."/>
            <person name="Sitter C.D."/>
            <person name="Shetty J."/>
            <person name="Smith T.J."/>
            <person name="Strong R."/>
            <person name="Sun J."/>
            <person name="Thomasova D."/>
            <person name="Ton L.Q."/>
            <person name="Topalis P."/>
            <person name="Tu Z.J."/>
            <person name="Unger M.F."/>
            <person name="Walenz B."/>
            <person name="Wang A.H."/>
            <person name="Wang J."/>
            <person name="Wang M."/>
            <person name="Wang X."/>
            <person name="Woodford K.J."/>
            <person name="Wortman J.R."/>
            <person name="Wu M."/>
            <person name="Yao A."/>
            <person name="Zdobnov E.M."/>
            <person name="Zhang H."/>
            <person name="Zhao Q."/>
            <person name="Zhao S."/>
            <person name="Zhu S.C."/>
            <person name="Zhimulev I."/>
            <person name="Coluzzi M."/>
            <person name="della Torre A."/>
            <person name="Roth C.W."/>
            <person name="Louis C."/>
            <person name="Kalush F."/>
            <person name="Mural R.J."/>
            <person name="Myers E.W."/>
            <person name="Adams M.D."/>
            <person name="Smith H.O."/>
            <person name="Broder S."/>
            <person name="Gardner M.J."/>
            <person name="Fraser C.M."/>
            <person name="Birney E."/>
            <person name="Bork P."/>
            <person name="Brey P.T."/>
            <person name="Venter J.C."/>
            <person name="Weissenbach J."/>
            <person name="Kafatos F.C."/>
            <person name="Collins F.H."/>
            <person name="Hoffman S.L."/>
        </authorList>
    </citation>
    <scope>NUCLEOTIDE SEQUENCE [LARGE SCALE GENOMIC DNA]</scope>
    <source>
        <strain>PEST</strain>
    </source>
</reference>
<organism>
    <name type="scientific">Anopheles gambiae</name>
    <name type="common">African malaria mosquito</name>
    <dbReference type="NCBI Taxonomy" id="7165"/>
    <lineage>
        <taxon>Eukaryota</taxon>
        <taxon>Metazoa</taxon>
        <taxon>Ecdysozoa</taxon>
        <taxon>Arthropoda</taxon>
        <taxon>Hexapoda</taxon>
        <taxon>Insecta</taxon>
        <taxon>Pterygota</taxon>
        <taxon>Neoptera</taxon>
        <taxon>Endopterygota</taxon>
        <taxon>Diptera</taxon>
        <taxon>Nematocera</taxon>
        <taxon>Culicoidea</taxon>
        <taxon>Culicidae</taxon>
        <taxon>Anophelinae</taxon>
        <taxon>Anopheles</taxon>
    </lineage>
</organism>
<proteinExistence type="inferred from homology"/>
<comment type="function">
    <text evidence="2">Mediates the side-chain deamidation of N-terminal glutamine residues to glutamate, an important step in N-end rule pathway of protein degradation. Conversion of the resulting N-terminal glutamine to glutamate renders the protein susceptible to arginylation, polyubiquitination and degradation as specified by the N-end rule. Does not act on substrates with internal or C-terminal glutamine and does not act on non-glutamine residues in any position.</text>
</comment>
<comment type="catalytic activity">
    <reaction evidence="2">
        <text>N-terminal L-glutaminyl-[protein] + H2O = N-terminal L-glutamyl-[protein] + NH4(+)</text>
        <dbReference type="Rhea" id="RHEA:50680"/>
        <dbReference type="Rhea" id="RHEA-COMP:12668"/>
        <dbReference type="Rhea" id="RHEA-COMP:12777"/>
        <dbReference type="ChEBI" id="CHEBI:15377"/>
        <dbReference type="ChEBI" id="CHEBI:28938"/>
        <dbReference type="ChEBI" id="CHEBI:64721"/>
        <dbReference type="ChEBI" id="CHEBI:64722"/>
        <dbReference type="EC" id="3.5.1.122"/>
    </reaction>
</comment>
<comment type="subunit">
    <text evidence="3">Monomer.</text>
</comment>
<comment type="similarity">
    <text evidence="4">Belongs to the NTAQ1 family.</text>
</comment>
<evidence type="ECO:0000250" key="1"/>
<evidence type="ECO:0000250" key="2">
    <source>
        <dbReference type="UniProtKB" id="Q80WB5"/>
    </source>
</evidence>
<evidence type="ECO:0000250" key="3">
    <source>
        <dbReference type="UniProtKB" id="Q96HA8"/>
    </source>
</evidence>
<evidence type="ECO:0000305" key="4"/>
<accession>Q7Q968</accession>
<keyword id="KW-0378">Hydrolase</keyword>
<keyword id="KW-1185">Reference proteome</keyword>
<dbReference type="EC" id="3.5.1.122" evidence="2"/>
<dbReference type="EMBL" id="AAAB01008905">
    <property type="protein sequence ID" value="EAA09695.3"/>
    <property type="molecule type" value="Genomic_DNA"/>
</dbReference>
<dbReference type="SMR" id="Q7Q968"/>
<dbReference type="FunCoup" id="Q7Q968">
    <property type="interactions" value="1602"/>
</dbReference>
<dbReference type="STRING" id="7165.Q7Q968"/>
<dbReference type="PaxDb" id="7165-AGAP004865-PA"/>
<dbReference type="EnsemblMetazoa" id="AGAP004865-RA">
    <property type="protein sequence ID" value="AGAP004865-PA"/>
    <property type="gene ID" value="AGAP004865"/>
</dbReference>
<dbReference type="GeneID" id="1275093"/>
<dbReference type="KEGG" id="aga:1275093"/>
<dbReference type="CTD" id="36743"/>
<dbReference type="VEuPathDB" id="VectorBase:AGAMI1_001687"/>
<dbReference type="VEuPathDB" id="VectorBase:AGAP004865"/>
<dbReference type="eggNOG" id="KOG3261">
    <property type="taxonomic scope" value="Eukaryota"/>
</dbReference>
<dbReference type="HOGENOM" id="CLU_091083_1_0_1"/>
<dbReference type="InParanoid" id="Q7Q968"/>
<dbReference type="OMA" id="GWGTVYS"/>
<dbReference type="PhylomeDB" id="Q7Q968"/>
<dbReference type="Proteomes" id="UP000007062">
    <property type="component" value="Chromosome 2L"/>
</dbReference>
<dbReference type="GO" id="GO:0005829">
    <property type="term" value="C:cytosol"/>
    <property type="evidence" value="ECO:0000318"/>
    <property type="project" value="GO_Central"/>
</dbReference>
<dbReference type="GO" id="GO:0005634">
    <property type="term" value="C:nucleus"/>
    <property type="evidence" value="ECO:0000318"/>
    <property type="project" value="GO_Central"/>
</dbReference>
<dbReference type="GO" id="GO:0008418">
    <property type="term" value="F:protein-N-terminal asparagine amidohydrolase activity"/>
    <property type="evidence" value="ECO:0007669"/>
    <property type="project" value="InterPro"/>
</dbReference>
<dbReference type="GO" id="GO:0070773">
    <property type="term" value="F:protein-N-terminal glutamine amidohydrolase activity"/>
    <property type="evidence" value="ECO:0000318"/>
    <property type="project" value="GO_Central"/>
</dbReference>
<dbReference type="FunFam" id="3.10.620.10:FF:000001">
    <property type="entry name" value="Blast:Protein N-terminal glutamine amidohydrolase"/>
    <property type="match status" value="1"/>
</dbReference>
<dbReference type="Gene3D" id="3.10.620.10">
    <property type="entry name" value="Protein N-terminal glutamine amidohydrolase, alpha beta roll"/>
    <property type="match status" value="1"/>
</dbReference>
<dbReference type="InterPro" id="IPR037132">
    <property type="entry name" value="N_Gln_amidohydro_ab_roll_sf"/>
</dbReference>
<dbReference type="InterPro" id="IPR039733">
    <property type="entry name" value="NTAQ1"/>
</dbReference>
<dbReference type="InterPro" id="IPR023128">
    <property type="entry name" value="Prot_N_Gln_amidohydro_ab_roll"/>
</dbReference>
<dbReference type="PANTHER" id="PTHR13035">
    <property type="entry name" value="PROTEIN N-TERMINAL GLUTAMINE AMIDOHYDROLASE"/>
    <property type="match status" value="1"/>
</dbReference>
<dbReference type="PANTHER" id="PTHR13035:SF0">
    <property type="entry name" value="PROTEIN N-TERMINAL GLUTAMINE AMIDOHYDROLASE"/>
    <property type="match status" value="1"/>
</dbReference>
<dbReference type="Pfam" id="PF09764">
    <property type="entry name" value="Nt_Gln_amidase"/>
    <property type="match status" value="1"/>
</dbReference>
<gene>
    <name type="primary">tun</name>
    <name type="ORF">AGAP004865</name>
</gene>